<gene>
    <name type="ordered locus">SERP2314</name>
</gene>
<reference key="1">
    <citation type="journal article" date="2005" name="J. Bacteriol.">
        <title>Insights on evolution of virulence and resistance from the complete genome analysis of an early methicillin-resistant Staphylococcus aureus strain and a biofilm-producing methicillin-resistant Staphylococcus epidermidis strain.</title>
        <authorList>
            <person name="Gill S.R."/>
            <person name="Fouts D.E."/>
            <person name="Archer G.L."/>
            <person name="Mongodin E.F."/>
            <person name="DeBoy R.T."/>
            <person name="Ravel J."/>
            <person name="Paulsen I.T."/>
            <person name="Kolonay J.F."/>
            <person name="Brinkac L.M."/>
            <person name="Beanan M.J."/>
            <person name="Dodson R.J."/>
            <person name="Daugherty S.C."/>
            <person name="Madupu R."/>
            <person name="Angiuoli S.V."/>
            <person name="Durkin A.S."/>
            <person name="Haft D.H."/>
            <person name="Vamathevan J.J."/>
            <person name="Khouri H."/>
            <person name="Utterback T.R."/>
            <person name="Lee C."/>
            <person name="Dimitrov G."/>
            <person name="Jiang L."/>
            <person name="Qin H."/>
            <person name="Weidman J."/>
            <person name="Tran K."/>
            <person name="Kang K.H."/>
            <person name="Hance I.R."/>
            <person name="Nelson K.E."/>
            <person name="Fraser C.M."/>
        </authorList>
    </citation>
    <scope>NUCLEOTIDE SEQUENCE [LARGE SCALE GENOMIC DNA]</scope>
    <source>
        <strain>ATCC 35984 / DSM 28319 / BCRC 17069 / CCUG 31568 / BM 3577 / RP62A</strain>
    </source>
</reference>
<sequence>MTKFNFDQVHSDIQFKIKHLMVSQVKGTFKQFDVQLDGDINDLTSLKATATIIPSSIDTQNEDRDNHLRSNDFFGTEDNDKMTFVTKEINENQVVGDLTIKGETHEETFDVEFNGVSKNPMNGQQVTGFIVSGTINREKYGINFNQALETGGVMLGKNVKFEASAEFSIDN</sequence>
<accession>Q5HKN0</accession>
<protein>
    <recommendedName>
        <fullName>UPF0312 protein SERP2314</fullName>
    </recommendedName>
</protein>
<evidence type="ECO:0000305" key="1"/>
<dbReference type="EMBL" id="CP000029">
    <property type="protein sequence ID" value="AAW53217.1"/>
    <property type="molecule type" value="Genomic_DNA"/>
</dbReference>
<dbReference type="RefSeq" id="WP_001829423.1">
    <property type="nucleotide sequence ID" value="NC_002976.3"/>
</dbReference>
<dbReference type="SMR" id="Q5HKN0"/>
<dbReference type="KEGG" id="ser:SERP2314"/>
<dbReference type="eggNOG" id="COG2353">
    <property type="taxonomic scope" value="Bacteria"/>
</dbReference>
<dbReference type="HOGENOM" id="CLU_071003_3_0_9"/>
<dbReference type="Proteomes" id="UP000000531">
    <property type="component" value="Chromosome"/>
</dbReference>
<dbReference type="Gene3D" id="2.40.128.110">
    <property type="entry name" value="Lipid/polyisoprenoid-binding, YceI-like"/>
    <property type="match status" value="1"/>
</dbReference>
<dbReference type="InterPro" id="IPR007372">
    <property type="entry name" value="Lipid/polyisoprenoid-bd_YceI"/>
</dbReference>
<dbReference type="InterPro" id="IPR036761">
    <property type="entry name" value="TTHA0802/YceI-like_sf"/>
</dbReference>
<dbReference type="PANTHER" id="PTHR34406">
    <property type="entry name" value="PROTEIN YCEI"/>
    <property type="match status" value="1"/>
</dbReference>
<dbReference type="PANTHER" id="PTHR34406:SF1">
    <property type="entry name" value="PROTEIN YCEI"/>
    <property type="match status" value="1"/>
</dbReference>
<dbReference type="Pfam" id="PF04264">
    <property type="entry name" value="YceI"/>
    <property type="match status" value="1"/>
</dbReference>
<dbReference type="SMART" id="SM00867">
    <property type="entry name" value="YceI"/>
    <property type="match status" value="1"/>
</dbReference>
<dbReference type="SUPFAM" id="SSF101874">
    <property type="entry name" value="YceI-like"/>
    <property type="match status" value="1"/>
</dbReference>
<organism>
    <name type="scientific">Staphylococcus epidermidis (strain ATCC 35984 / DSM 28319 / BCRC 17069 / CCUG 31568 / BM 3577 / RP62A)</name>
    <dbReference type="NCBI Taxonomy" id="176279"/>
    <lineage>
        <taxon>Bacteria</taxon>
        <taxon>Bacillati</taxon>
        <taxon>Bacillota</taxon>
        <taxon>Bacilli</taxon>
        <taxon>Bacillales</taxon>
        <taxon>Staphylococcaceae</taxon>
        <taxon>Staphylococcus</taxon>
    </lineage>
</organism>
<comment type="similarity">
    <text evidence="1">Belongs to the UPF0312 family.</text>
</comment>
<feature type="chain" id="PRO_0000299517" description="UPF0312 protein SERP2314">
    <location>
        <begin position="1"/>
        <end position="171"/>
    </location>
</feature>
<proteinExistence type="inferred from homology"/>
<name>Y2314_STAEQ</name>
<keyword id="KW-1185">Reference proteome</keyword>